<dbReference type="EC" id="5.4.99.12" evidence="1"/>
<dbReference type="EMBL" id="CR954246">
    <property type="protein sequence ID" value="CAI87131.1"/>
    <property type="molecule type" value="Genomic_DNA"/>
</dbReference>
<dbReference type="SMR" id="Q3IF40"/>
<dbReference type="STRING" id="326442.PSHAa2075"/>
<dbReference type="KEGG" id="pha:PSHAa2075"/>
<dbReference type="eggNOG" id="COG0101">
    <property type="taxonomic scope" value="Bacteria"/>
</dbReference>
<dbReference type="HOGENOM" id="CLU_014673_0_2_6"/>
<dbReference type="BioCyc" id="PHAL326442:PSHA_RS10275-MONOMER"/>
<dbReference type="Proteomes" id="UP000006843">
    <property type="component" value="Chromosome I"/>
</dbReference>
<dbReference type="GO" id="GO:0003723">
    <property type="term" value="F:RNA binding"/>
    <property type="evidence" value="ECO:0007669"/>
    <property type="project" value="InterPro"/>
</dbReference>
<dbReference type="GO" id="GO:0160147">
    <property type="term" value="F:tRNA pseudouridine(38-40) synthase activity"/>
    <property type="evidence" value="ECO:0007669"/>
    <property type="project" value="UniProtKB-EC"/>
</dbReference>
<dbReference type="GO" id="GO:0031119">
    <property type="term" value="P:tRNA pseudouridine synthesis"/>
    <property type="evidence" value="ECO:0007669"/>
    <property type="project" value="UniProtKB-UniRule"/>
</dbReference>
<dbReference type="CDD" id="cd02570">
    <property type="entry name" value="PseudoU_synth_EcTruA"/>
    <property type="match status" value="1"/>
</dbReference>
<dbReference type="FunFam" id="3.30.70.580:FF:000001">
    <property type="entry name" value="tRNA pseudouridine synthase A"/>
    <property type="match status" value="1"/>
</dbReference>
<dbReference type="Gene3D" id="3.30.70.660">
    <property type="entry name" value="Pseudouridine synthase I, catalytic domain, C-terminal subdomain"/>
    <property type="match status" value="1"/>
</dbReference>
<dbReference type="Gene3D" id="3.30.70.580">
    <property type="entry name" value="Pseudouridine synthase I, catalytic domain, N-terminal subdomain"/>
    <property type="match status" value="1"/>
</dbReference>
<dbReference type="HAMAP" id="MF_00171">
    <property type="entry name" value="TruA"/>
    <property type="match status" value="1"/>
</dbReference>
<dbReference type="InterPro" id="IPR020103">
    <property type="entry name" value="PsdUridine_synth_cat_dom_sf"/>
</dbReference>
<dbReference type="InterPro" id="IPR001406">
    <property type="entry name" value="PsdUridine_synth_TruA"/>
</dbReference>
<dbReference type="InterPro" id="IPR020097">
    <property type="entry name" value="PsdUridine_synth_TruA_a/b_dom"/>
</dbReference>
<dbReference type="InterPro" id="IPR020095">
    <property type="entry name" value="PsdUridine_synth_TruA_C"/>
</dbReference>
<dbReference type="InterPro" id="IPR020094">
    <property type="entry name" value="TruA/RsuA/RluB/E/F_N"/>
</dbReference>
<dbReference type="NCBIfam" id="TIGR00071">
    <property type="entry name" value="hisT_truA"/>
    <property type="match status" value="1"/>
</dbReference>
<dbReference type="PANTHER" id="PTHR11142">
    <property type="entry name" value="PSEUDOURIDYLATE SYNTHASE"/>
    <property type="match status" value="1"/>
</dbReference>
<dbReference type="PANTHER" id="PTHR11142:SF0">
    <property type="entry name" value="TRNA PSEUDOURIDINE SYNTHASE-LIKE 1"/>
    <property type="match status" value="1"/>
</dbReference>
<dbReference type="Pfam" id="PF01416">
    <property type="entry name" value="PseudoU_synth_1"/>
    <property type="match status" value="2"/>
</dbReference>
<dbReference type="PIRSF" id="PIRSF001430">
    <property type="entry name" value="tRNA_psdUrid_synth"/>
    <property type="match status" value="1"/>
</dbReference>
<dbReference type="SUPFAM" id="SSF55120">
    <property type="entry name" value="Pseudouridine synthase"/>
    <property type="match status" value="1"/>
</dbReference>
<protein>
    <recommendedName>
        <fullName evidence="1">tRNA pseudouridine synthase A</fullName>
        <ecNumber evidence="1">5.4.99.12</ecNumber>
    </recommendedName>
    <alternativeName>
        <fullName evidence="1">tRNA pseudouridine(38-40) synthase</fullName>
    </alternativeName>
    <alternativeName>
        <fullName evidence="1">tRNA pseudouridylate synthase I</fullName>
    </alternativeName>
    <alternativeName>
        <fullName evidence="1">tRNA-uridine isomerase I</fullName>
    </alternativeName>
</protein>
<gene>
    <name evidence="1" type="primary">truA</name>
    <name type="ordered locus">PSHAa2075</name>
</gene>
<proteinExistence type="inferred from homology"/>
<accession>Q3IF40</accession>
<name>TRUA_PSET1</name>
<feature type="chain" id="PRO_1000017142" description="tRNA pseudouridine synthase A">
    <location>
        <begin position="1"/>
        <end position="264"/>
    </location>
</feature>
<feature type="active site" description="Nucleophile" evidence="1">
    <location>
        <position position="51"/>
    </location>
</feature>
<feature type="binding site" evidence="1">
    <location>
        <position position="109"/>
    </location>
    <ligand>
        <name>substrate</name>
    </ligand>
</feature>
<comment type="function">
    <text evidence="1">Formation of pseudouridine at positions 38, 39 and 40 in the anticodon stem and loop of transfer RNAs.</text>
</comment>
<comment type="catalytic activity">
    <reaction evidence="1">
        <text>uridine(38/39/40) in tRNA = pseudouridine(38/39/40) in tRNA</text>
        <dbReference type="Rhea" id="RHEA:22376"/>
        <dbReference type="Rhea" id="RHEA-COMP:10085"/>
        <dbReference type="Rhea" id="RHEA-COMP:10087"/>
        <dbReference type="ChEBI" id="CHEBI:65314"/>
        <dbReference type="ChEBI" id="CHEBI:65315"/>
        <dbReference type="EC" id="5.4.99.12"/>
    </reaction>
</comment>
<comment type="subunit">
    <text evidence="1">Homodimer.</text>
</comment>
<comment type="similarity">
    <text evidence="1">Belongs to the tRNA pseudouridine synthase TruA family.</text>
</comment>
<keyword id="KW-0413">Isomerase</keyword>
<keyword id="KW-1185">Reference proteome</keyword>
<keyword id="KW-0819">tRNA processing</keyword>
<sequence length="264" mass="29613">MRVALGVEYNGARYSGWQRQSHVNSVQQEVETALSRICNHPVAIVCAGRTDAGVHGTGQVVHFDTDAPRDMVAFTLGMNTLLPKDIAIRFAQPVADDFHARFSATARRYRYVIYNNPLRGAVLNEGVTHFHHTLDETKMQEACQYLIGKYDFTSFRAIHCQANTAIRTIQHLSVQRQGSYVIIDIKANAFLHHMVRNITGCLMDIGLHKQQPVWLKELLDLKERAKASATAKAAGLYLVDVDYPEQFNIPKTPLGPLFLPDISI</sequence>
<organism>
    <name type="scientific">Pseudoalteromonas translucida (strain TAC 125)</name>
    <dbReference type="NCBI Taxonomy" id="326442"/>
    <lineage>
        <taxon>Bacteria</taxon>
        <taxon>Pseudomonadati</taxon>
        <taxon>Pseudomonadota</taxon>
        <taxon>Gammaproteobacteria</taxon>
        <taxon>Alteromonadales</taxon>
        <taxon>Pseudoalteromonadaceae</taxon>
        <taxon>Pseudoalteromonas</taxon>
    </lineage>
</organism>
<reference key="1">
    <citation type="journal article" date="2005" name="Genome Res.">
        <title>Coping with cold: the genome of the versatile marine Antarctica bacterium Pseudoalteromonas haloplanktis TAC125.</title>
        <authorList>
            <person name="Medigue C."/>
            <person name="Krin E."/>
            <person name="Pascal G."/>
            <person name="Barbe V."/>
            <person name="Bernsel A."/>
            <person name="Bertin P.N."/>
            <person name="Cheung F."/>
            <person name="Cruveiller S."/>
            <person name="D'Amico S."/>
            <person name="Duilio A."/>
            <person name="Fang G."/>
            <person name="Feller G."/>
            <person name="Ho C."/>
            <person name="Mangenot S."/>
            <person name="Marino G."/>
            <person name="Nilsson J."/>
            <person name="Parrilli E."/>
            <person name="Rocha E.P.C."/>
            <person name="Rouy Z."/>
            <person name="Sekowska A."/>
            <person name="Tutino M.L."/>
            <person name="Vallenet D."/>
            <person name="von Heijne G."/>
            <person name="Danchin A."/>
        </authorList>
    </citation>
    <scope>NUCLEOTIDE SEQUENCE [LARGE SCALE GENOMIC DNA]</scope>
    <source>
        <strain>TAC 125</strain>
    </source>
</reference>
<evidence type="ECO:0000255" key="1">
    <source>
        <dbReference type="HAMAP-Rule" id="MF_00171"/>
    </source>
</evidence>